<keyword id="KW-1003">Cell membrane</keyword>
<keyword id="KW-0378">Hydrolase</keyword>
<keyword id="KW-0444">Lipid biosynthesis</keyword>
<keyword id="KW-0443">Lipid metabolism</keyword>
<keyword id="KW-0472">Membrane</keyword>
<keyword id="KW-0594">Phospholipid biosynthesis</keyword>
<keyword id="KW-1208">Phospholipid metabolism</keyword>
<keyword id="KW-1185">Reference proteome</keyword>
<keyword id="KW-0812">Transmembrane</keyword>
<keyword id="KW-1133">Transmembrane helix</keyword>
<protein>
    <recommendedName>
        <fullName evidence="1">CDP-diacylglycerol pyrophosphatase</fullName>
        <ecNumber evidence="1">3.6.1.26</ecNumber>
    </recommendedName>
    <alternativeName>
        <fullName evidence="1">CDP-diacylglycerol phosphatidylhydrolase</fullName>
    </alternativeName>
    <alternativeName>
        <fullName evidence="1">CDP-diglyceride hydrolase</fullName>
    </alternativeName>
</protein>
<proteinExistence type="inferred from homology"/>
<comment type="catalytic activity">
    <reaction evidence="1">
        <text>a CDP-1,2-diacyl-sn-glycerol + H2O = a 1,2-diacyl-sn-glycero-3-phosphate + CMP + 2 H(+)</text>
        <dbReference type="Rhea" id="RHEA:15221"/>
        <dbReference type="ChEBI" id="CHEBI:15377"/>
        <dbReference type="ChEBI" id="CHEBI:15378"/>
        <dbReference type="ChEBI" id="CHEBI:58332"/>
        <dbReference type="ChEBI" id="CHEBI:58608"/>
        <dbReference type="ChEBI" id="CHEBI:60377"/>
        <dbReference type="EC" id="3.6.1.26"/>
    </reaction>
</comment>
<comment type="pathway">
    <text evidence="1">Phospholipid metabolism; CDP-diacylglycerol degradation; phosphatidate from CDP-diacylglycerol: step 1/1.</text>
</comment>
<comment type="subcellular location">
    <subcellularLocation>
        <location evidence="1">Cell membrane</location>
        <topology evidence="1">Single-pass membrane protein</topology>
    </subcellularLocation>
</comment>
<comment type="similarity">
    <text evidence="1">Belongs to the Cdh family.</text>
</comment>
<name>CDH_MYCTA</name>
<evidence type="ECO:0000255" key="1">
    <source>
        <dbReference type="HAMAP-Rule" id="MF_00319"/>
    </source>
</evidence>
<dbReference type="EC" id="3.6.1.26" evidence="1"/>
<dbReference type="EMBL" id="CP000611">
    <property type="protein sequence ID" value="ABQ74072.1"/>
    <property type="molecule type" value="Genomic_DNA"/>
</dbReference>
<dbReference type="RefSeq" id="WP_003411717.1">
    <property type="nucleotide sequence ID" value="NZ_CP016972.1"/>
</dbReference>
<dbReference type="SMR" id="A5U4X2"/>
<dbReference type="KEGG" id="mra:MRA_2306"/>
<dbReference type="eggNOG" id="COG2134">
    <property type="taxonomic scope" value="Bacteria"/>
</dbReference>
<dbReference type="HOGENOM" id="CLU_077117_1_0_11"/>
<dbReference type="UniPathway" id="UPA00609">
    <property type="reaction ID" value="UER00664"/>
</dbReference>
<dbReference type="Proteomes" id="UP000001988">
    <property type="component" value="Chromosome"/>
</dbReference>
<dbReference type="GO" id="GO:0005886">
    <property type="term" value="C:plasma membrane"/>
    <property type="evidence" value="ECO:0007669"/>
    <property type="project" value="UniProtKB-SubCell"/>
</dbReference>
<dbReference type="GO" id="GO:0008715">
    <property type="term" value="F:CDP-diacylglycerol diphosphatase activity"/>
    <property type="evidence" value="ECO:0007669"/>
    <property type="project" value="UniProtKB-UniRule"/>
</dbReference>
<dbReference type="GO" id="GO:0046342">
    <property type="term" value="P:CDP-diacylglycerol catabolic process"/>
    <property type="evidence" value="ECO:0007669"/>
    <property type="project" value="UniProtKB-UniRule"/>
</dbReference>
<dbReference type="GO" id="GO:0008654">
    <property type="term" value="P:phospholipid biosynthetic process"/>
    <property type="evidence" value="ECO:0007669"/>
    <property type="project" value="UniProtKB-KW"/>
</dbReference>
<dbReference type="Gene3D" id="3.30.428.30">
    <property type="entry name" value="HIT family - CDH-like"/>
    <property type="match status" value="1"/>
</dbReference>
<dbReference type="HAMAP" id="MF_00319">
    <property type="entry name" value="Cdh"/>
    <property type="match status" value="1"/>
</dbReference>
<dbReference type="InterPro" id="IPR003763">
    <property type="entry name" value="CDP-diacylglyc_Pase"/>
</dbReference>
<dbReference type="InterPro" id="IPR036265">
    <property type="entry name" value="HIT-like_sf"/>
</dbReference>
<dbReference type="NCBIfam" id="NF003982">
    <property type="entry name" value="PRK05471.1-1"/>
    <property type="match status" value="1"/>
</dbReference>
<dbReference type="Pfam" id="PF02611">
    <property type="entry name" value="CDH"/>
    <property type="match status" value="1"/>
</dbReference>
<dbReference type="PIRSF" id="PIRSF001273">
    <property type="entry name" value="CDH"/>
    <property type="match status" value="1"/>
</dbReference>
<dbReference type="SUPFAM" id="SSF54197">
    <property type="entry name" value="HIT-like"/>
    <property type="match status" value="1"/>
</dbReference>
<reference key="1">
    <citation type="journal article" date="2008" name="PLoS ONE">
        <title>Genetic basis of virulence attenuation revealed by comparative genomic analysis of Mycobacterium tuberculosis strain H37Ra versus H37Rv.</title>
        <authorList>
            <person name="Zheng H."/>
            <person name="Lu L."/>
            <person name="Wang B."/>
            <person name="Pu S."/>
            <person name="Zhang X."/>
            <person name="Zhu G."/>
            <person name="Shi W."/>
            <person name="Zhang L."/>
            <person name="Wang H."/>
            <person name="Wang S."/>
            <person name="Zhao G."/>
            <person name="Zhang Y."/>
        </authorList>
    </citation>
    <scope>NUCLEOTIDE SEQUENCE [LARGE SCALE GENOMIC DNA]</scope>
    <source>
        <strain>ATCC 25177 / H37Ra</strain>
    </source>
</reference>
<gene>
    <name evidence="1" type="primary">cdh</name>
    <name type="ordered locus">MRA_2306</name>
</gene>
<accession>A5U4X2</accession>
<sequence>MPKSRRAVSLSVLIGAVIAALAGALIAVTVPARPNRPEADREALWKIVHDRCEFGYRRTGAYAPCTFVDEQSGTALYKADFDPYQFLLIPLARITGIEDPALRESAGRNYLYDAWAARFLVTARLNNSLPESDVVLTINPKNARTQDQLHIHISCSSPTTSAALRNVDTSEYVGWKQLPIDLGGRRFQGLAVDTKAFESRNLFRDIYLKVTADGKKMENASIAVANVAQDQFLLLLAEGTEDQPVAAETLQDHDCSITKS</sequence>
<feature type="chain" id="PRO_1000019265" description="CDP-diacylglycerol pyrophosphatase">
    <location>
        <begin position="1"/>
        <end position="260"/>
    </location>
</feature>
<feature type="transmembrane region" description="Helical" evidence="1">
    <location>
        <begin position="10"/>
        <end position="30"/>
    </location>
</feature>
<organism>
    <name type="scientific">Mycobacterium tuberculosis (strain ATCC 25177 / H37Ra)</name>
    <dbReference type="NCBI Taxonomy" id="419947"/>
    <lineage>
        <taxon>Bacteria</taxon>
        <taxon>Bacillati</taxon>
        <taxon>Actinomycetota</taxon>
        <taxon>Actinomycetes</taxon>
        <taxon>Mycobacteriales</taxon>
        <taxon>Mycobacteriaceae</taxon>
        <taxon>Mycobacterium</taxon>
        <taxon>Mycobacterium tuberculosis complex</taxon>
    </lineage>
</organism>